<reference key="1">
    <citation type="journal article" date="2000" name="DNA Seq.">
        <title>Cloning and sequencing of feline and canine ice-related cDNAs encoding hybrid caspase-1/caspase-13-like propeptides.</title>
        <authorList>
            <person name="Taylor S."/>
            <person name="Hanlon L."/>
            <person name="McGillivray C."/>
            <person name="Gault E.A."/>
            <person name="Argyle D.J."/>
            <person name="Onions D.E."/>
            <person name="Nicolson L."/>
        </authorList>
    </citation>
    <scope>NUCLEOTIDE SEQUENCE [MRNA]</scope>
</reference>
<evidence type="ECO:0000250" key="1">
    <source>
        <dbReference type="UniProtKB" id="P29452"/>
    </source>
</evidence>
<evidence type="ECO:0000250" key="2">
    <source>
        <dbReference type="UniProtKB" id="P29466"/>
    </source>
</evidence>
<evidence type="ECO:0000255" key="3"/>
<evidence type="ECO:0000255" key="4">
    <source>
        <dbReference type="PROSITE-ProRule" id="PRU00046"/>
    </source>
</evidence>
<evidence type="ECO:0000305" key="5"/>
<accession>Q9MZV7</accession>
<comment type="function">
    <text evidence="2">Thiol protease involved in a variety of inflammatory processes by proteolytically cleaving other proteins, such as the precursors of the inflammatory cytokines interleukin-1 beta (IL1B) and interleukin 18 (IL18) as well as the pyroptosis inducer Gasdermin-D (GSDMD), into active mature peptides. Plays a key role in cell immunity as an inflammatory response initiator: once activated through formation of an inflammasome complex, it initiates a pro-inflammatory response through the cleavage of the two inflammatory cytokines IL1B and IL18, releasing the mature cytokines which are involved in a variety of inflammatory processes. Cleaves a tetrapeptide after an Asp residue at position P1. Also initiates pyroptosis, a programmed lytic cell death pathway, through cleavage of GSDMD. In contrast to cleavage of interleukin IL1B, recognition and cleavage of GSDMD is not strictly dependent on the consensus cleavage site but depends on an exosite interface on CASP1 that recognizes and binds the Gasdermin-D, C-terminal (GSDMD-CT) part. Cleaves and activates CASP7 in response to bacterial infection, promoting plasma membrane repair. Upon inflammasome activation, during DNA virus infection but not RNA virus challenge, controls antiviral immunity through the cleavage of CGAS, rendering it inactive. In apoptotic cells, cleaves SPHK2 which is released from cells and remains enzymatically active extracellularly.</text>
</comment>
<comment type="catalytic activity">
    <reaction evidence="2">
        <text>Strict requirement for an Asp residue at position P1 and has a preferred cleavage sequence of Tyr-Val-Ala-Asp-|-.</text>
        <dbReference type="EC" id="3.4.22.36"/>
    </reaction>
</comment>
<comment type="subunit">
    <text evidence="1 2">Heterotetramer that consists of two anti-parallel arranged heterodimers, each one formed by a 20 kDa (Caspase-1 subunit p20) and a 10 kDa (Caspase-1 subunit p10) subunit. May be a component of the inflammasome, a protein complex which also includes PYCARD, CARD8 and NLRP2 and whose function would be the activation of pro-inflammatory caspases. Component of the AIM2 PANoptosome complex, a multiprotein complex that drives inflammatory cell death (PANoptosis). Both the p10 and p20 subunits interact with MEFV. Interacts with CARD17P/INCA and CARD18. Interacts with SERPINB1; this interaction regulates CASP1 activity.</text>
</comment>
<comment type="subunit">
    <molecule>Caspase-1 subunit p20</molecule>
    <text evidence="2">Heterotetramer that consists of two anti-parallel arranged heterodimers, each one formed by a 20 kDa (Caspase-1 subunit p20) and a 10 kDa (Caspase-1 subunit p10) subunit.</text>
</comment>
<comment type="subunit">
    <molecule>Caspase-1 subunit p10</molecule>
    <text evidence="2">Heterotetramer that consists of two anti-parallel arranged heterodimers, each one formed by a 20 kDa (Caspase-1 subunit p20) and a 10 kDa (Caspase-1 subunit p10) subunit.</text>
</comment>
<comment type="subcellular location">
    <subcellularLocation>
        <location evidence="2">Cytoplasm</location>
    </subcellularLocation>
    <subcellularLocation>
        <location evidence="2">Cell membrane</location>
    </subcellularLocation>
</comment>
<comment type="PTM">
    <text evidence="2">The two subunits are derived from the precursor sequence by an autocatalytic mechanism.</text>
</comment>
<comment type="PTM">
    <text evidence="2">Ubiquitinated via 'Lys-11'-linked polyubiquitination. Deubiquitinated by USP8.</text>
</comment>
<comment type="similarity">
    <text evidence="5">Belongs to the peptidase C14A family.</text>
</comment>
<feature type="propeptide" id="PRO_0000004509" evidence="3">
    <location>
        <begin position="1"/>
        <end position="119"/>
    </location>
</feature>
<feature type="chain" id="PRO_0000004510" description="Caspase-1 subunit p20" evidence="2">
    <location>
        <begin position="120"/>
        <end position="297"/>
    </location>
</feature>
<feature type="propeptide" id="PRO_0000004511" evidence="3">
    <location>
        <begin position="298"/>
        <end position="316"/>
    </location>
</feature>
<feature type="chain" id="PRO_0000004512" description="Caspase-1 subunit p10" evidence="2">
    <location>
        <begin position="317"/>
        <end position="404"/>
    </location>
</feature>
<feature type="domain" description="CARD" evidence="4">
    <location>
        <begin position="1"/>
        <end position="91"/>
    </location>
</feature>
<feature type="active site" evidence="2">
    <location>
        <position position="237"/>
    </location>
</feature>
<feature type="active site" evidence="2">
    <location>
        <position position="285"/>
    </location>
</feature>
<feature type="modified residue" description="Phosphoserine" evidence="1">
    <location>
        <position position="302"/>
    </location>
</feature>
<sequence length="404" mass="45662">MADKVLKDKRRLFVRSVDMGTINGLLDELFEKRVLNHEEMERVRCAHSTVMDQARVLIDSVLRKGPNACQIFISNICNEDIHLAQTLGLSSGSPSGNDHTKLDSQVEVPSLPAFVENMPGPTIPDSEESTDTLKLCPPETFVKMYKEKAEEIYPIKERKDRTRLALIICNIEFDHLSTRDGAELDIAGMESLLEGLGYSVVVKRKLTAKGMESVLREFAARPEHKSSDSTFLVLMSHGILNGICGTAHSVENPDVLAYDTIFQIFNNRHCLNLKDKPKVIIIQACRGENPGELWVSDSPKASTDSWTHQPLMLQSDAIHKVHVEKDFIAFCSSTPHNVSWRHITKGSLFIAQLITCFQKYSWCCHLEGVFRKVQQSFEKPDVKAQMPTIERVSMTRYFYLFPGH</sequence>
<name>CASP1_CANLF</name>
<dbReference type="EC" id="3.4.22.36" evidence="2"/>
<dbReference type="EMBL" id="AF135967">
    <property type="protein sequence ID" value="AAF64388.1"/>
    <property type="molecule type" value="mRNA"/>
</dbReference>
<dbReference type="RefSeq" id="NP_001003125.1">
    <property type="nucleotide sequence ID" value="NM_001003125.1"/>
</dbReference>
<dbReference type="SMR" id="Q9MZV7"/>
<dbReference type="FunCoup" id="Q9MZV7">
    <property type="interactions" value="160"/>
</dbReference>
<dbReference type="STRING" id="9615.ENSCAFP00000031566"/>
<dbReference type="MEROPS" id="C14.024"/>
<dbReference type="GeneID" id="403724"/>
<dbReference type="KEGG" id="cfa:403724"/>
<dbReference type="CTD" id="837"/>
<dbReference type="eggNOG" id="KOG3573">
    <property type="taxonomic scope" value="Eukaryota"/>
</dbReference>
<dbReference type="InParanoid" id="Q9MZV7"/>
<dbReference type="OrthoDB" id="6097640at2759"/>
<dbReference type="BRENDA" id="3.4.22.36">
    <property type="organism ID" value="1153"/>
</dbReference>
<dbReference type="Proteomes" id="UP000002254">
    <property type="component" value="Unplaced"/>
</dbReference>
<dbReference type="Proteomes" id="UP000694429">
    <property type="component" value="Unplaced"/>
</dbReference>
<dbReference type="Proteomes" id="UP000694542">
    <property type="component" value="Unplaced"/>
</dbReference>
<dbReference type="Proteomes" id="UP000805418">
    <property type="component" value="Unplaced"/>
</dbReference>
<dbReference type="GO" id="GO:0097169">
    <property type="term" value="C:AIM2 inflammasome complex"/>
    <property type="evidence" value="ECO:0000250"/>
    <property type="project" value="UniProtKB"/>
</dbReference>
<dbReference type="GO" id="GO:0072557">
    <property type="term" value="C:IPAF inflammasome complex"/>
    <property type="evidence" value="ECO:0000250"/>
    <property type="project" value="UniProtKB"/>
</dbReference>
<dbReference type="GO" id="GO:0072558">
    <property type="term" value="C:NLRP1 inflammasome complex"/>
    <property type="evidence" value="ECO:0000250"/>
    <property type="project" value="UniProtKB"/>
</dbReference>
<dbReference type="GO" id="GO:0072559">
    <property type="term" value="C:NLRP3 inflammasome complex"/>
    <property type="evidence" value="ECO:0000250"/>
    <property type="project" value="UniProtKB"/>
</dbReference>
<dbReference type="GO" id="GO:0005886">
    <property type="term" value="C:plasma membrane"/>
    <property type="evidence" value="ECO:0007669"/>
    <property type="project" value="UniProtKB-SubCell"/>
</dbReference>
<dbReference type="GO" id="GO:0004197">
    <property type="term" value="F:cysteine-type endopeptidase activity"/>
    <property type="evidence" value="ECO:0000250"/>
    <property type="project" value="UniProtKB"/>
</dbReference>
<dbReference type="GO" id="GO:0006915">
    <property type="term" value="P:apoptotic process"/>
    <property type="evidence" value="ECO:0007669"/>
    <property type="project" value="UniProtKB-KW"/>
</dbReference>
<dbReference type="GO" id="GO:0001819">
    <property type="term" value="P:positive regulation of cytokine production"/>
    <property type="evidence" value="ECO:0000250"/>
    <property type="project" value="UniProtKB"/>
</dbReference>
<dbReference type="GO" id="GO:0032731">
    <property type="term" value="P:positive regulation of interleukin-1 beta production"/>
    <property type="evidence" value="ECO:0000250"/>
    <property type="project" value="UniProtKB"/>
</dbReference>
<dbReference type="GO" id="GO:0016540">
    <property type="term" value="P:protein autoprocessing"/>
    <property type="evidence" value="ECO:0000250"/>
    <property type="project" value="UniProtKB"/>
</dbReference>
<dbReference type="GO" id="GO:0070269">
    <property type="term" value="P:pyroptotic inflammatory response"/>
    <property type="evidence" value="ECO:0000250"/>
    <property type="project" value="UniProtKB"/>
</dbReference>
<dbReference type="GO" id="GO:0042981">
    <property type="term" value="P:regulation of apoptotic process"/>
    <property type="evidence" value="ECO:0007669"/>
    <property type="project" value="InterPro"/>
</dbReference>
<dbReference type="GO" id="GO:0050727">
    <property type="term" value="P:regulation of inflammatory response"/>
    <property type="evidence" value="ECO:0000250"/>
    <property type="project" value="UniProtKB"/>
</dbReference>
<dbReference type="CDD" id="cd08325">
    <property type="entry name" value="CARD_CASP1-like"/>
    <property type="match status" value="1"/>
</dbReference>
<dbReference type="CDD" id="cd00032">
    <property type="entry name" value="CASc"/>
    <property type="match status" value="1"/>
</dbReference>
<dbReference type="FunFam" id="1.10.533.10:FF:000031">
    <property type="entry name" value="Caspase 1, isoform CRA_b"/>
    <property type="match status" value="1"/>
</dbReference>
<dbReference type="FunFam" id="3.40.50.1460:FF:000007">
    <property type="entry name" value="Caspase-1"/>
    <property type="match status" value="1"/>
</dbReference>
<dbReference type="Gene3D" id="3.40.50.1460">
    <property type="match status" value="1"/>
</dbReference>
<dbReference type="Gene3D" id="1.10.533.10">
    <property type="entry name" value="Death Domain, Fas"/>
    <property type="match status" value="1"/>
</dbReference>
<dbReference type="InterPro" id="IPR001315">
    <property type="entry name" value="CARD"/>
</dbReference>
<dbReference type="InterPro" id="IPR029030">
    <property type="entry name" value="Caspase-like_dom_sf"/>
</dbReference>
<dbReference type="InterPro" id="IPR033139">
    <property type="entry name" value="Caspase_cys_AS"/>
</dbReference>
<dbReference type="InterPro" id="IPR016129">
    <property type="entry name" value="Caspase_his_AS"/>
</dbReference>
<dbReference type="InterPro" id="IPR011029">
    <property type="entry name" value="DEATH-like_dom_sf"/>
</dbReference>
<dbReference type="InterPro" id="IPR002398">
    <property type="entry name" value="Pept_C14"/>
</dbReference>
<dbReference type="InterPro" id="IPR011600">
    <property type="entry name" value="Pept_C14_caspase"/>
</dbReference>
<dbReference type="InterPro" id="IPR002138">
    <property type="entry name" value="Pept_C14_p10"/>
</dbReference>
<dbReference type="InterPro" id="IPR001309">
    <property type="entry name" value="Pept_C14_p20"/>
</dbReference>
<dbReference type="InterPro" id="IPR015917">
    <property type="entry name" value="Pept_C14A"/>
</dbReference>
<dbReference type="PANTHER" id="PTHR47901">
    <property type="entry name" value="CASPASE RECRUITMENT DOMAIN-CONTAINING PROTEIN 18"/>
    <property type="match status" value="1"/>
</dbReference>
<dbReference type="PANTHER" id="PTHR47901:SF3">
    <property type="entry name" value="CASPASE-1"/>
    <property type="match status" value="1"/>
</dbReference>
<dbReference type="Pfam" id="PF00619">
    <property type="entry name" value="CARD"/>
    <property type="match status" value="1"/>
</dbReference>
<dbReference type="Pfam" id="PF00656">
    <property type="entry name" value="Peptidase_C14"/>
    <property type="match status" value="1"/>
</dbReference>
<dbReference type="PIRSF" id="PIRSF038001">
    <property type="entry name" value="Caspase_ICE"/>
    <property type="match status" value="1"/>
</dbReference>
<dbReference type="PRINTS" id="PR00376">
    <property type="entry name" value="IL1BCENZYME"/>
</dbReference>
<dbReference type="SMART" id="SM00114">
    <property type="entry name" value="CARD"/>
    <property type="match status" value="1"/>
</dbReference>
<dbReference type="SMART" id="SM00115">
    <property type="entry name" value="CASc"/>
    <property type="match status" value="1"/>
</dbReference>
<dbReference type="SUPFAM" id="SSF52129">
    <property type="entry name" value="Caspase-like"/>
    <property type="match status" value="1"/>
</dbReference>
<dbReference type="SUPFAM" id="SSF47986">
    <property type="entry name" value="DEATH domain"/>
    <property type="match status" value="1"/>
</dbReference>
<dbReference type="PROSITE" id="PS50209">
    <property type="entry name" value="CARD"/>
    <property type="match status" value="1"/>
</dbReference>
<dbReference type="PROSITE" id="PS01122">
    <property type="entry name" value="CASPASE_CYS"/>
    <property type="match status" value="1"/>
</dbReference>
<dbReference type="PROSITE" id="PS01121">
    <property type="entry name" value="CASPASE_HIS"/>
    <property type="match status" value="1"/>
</dbReference>
<dbReference type="PROSITE" id="PS50207">
    <property type="entry name" value="CASPASE_P10"/>
    <property type="match status" value="1"/>
</dbReference>
<dbReference type="PROSITE" id="PS50208">
    <property type="entry name" value="CASPASE_P20"/>
    <property type="match status" value="1"/>
</dbReference>
<organism>
    <name type="scientific">Canis lupus familiaris</name>
    <name type="common">Dog</name>
    <name type="synonym">Canis familiaris</name>
    <dbReference type="NCBI Taxonomy" id="9615"/>
    <lineage>
        <taxon>Eukaryota</taxon>
        <taxon>Metazoa</taxon>
        <taxon>Chordata</taxon>
        <taxon>Craniata</taxon>
        <taxon>Vertebrata</taxon>
        <taxon>Euteleostomi</taxon>
        <taxon>Mammalia</taxon>
        <taxon>Eutheria</taxon>
        <taxon>Laurasiatheria</taxon>
        <taxon>Carnivora</taxon>
        <taxon>Caniformia</taxon>
        <taxon>Canidae</taxon>
        <taxon>Canis</taxon>
    </lineage>
</organism>
<gene>
    <name type="primary">CASP1</name>
    <name type="synonym">IL1BC</name>
</gene>
<protein>
    <recommendedName>
        <fullName>Caspase-1</fullName>
        <shortName>CASP-1</shortName>
        <ecNumber evidence="2">3.4.22.36</ecNumber>
    </recommendedName>
    <alternativeName>
        <fullName>Interleukin-1 beta convertase</fullName>
        <shortName>IL-1BC</shortName>
    </alternativeName>
    <alternativeName>
        <fullName>Interleukin-1 beta-converting enzyme</fullName>
        <shortName>ICE</shortName>
        <shortName>IL-1 beta-converting enzyme</shortName>
    </alternativeName>
    <alternativeName>
        <fullName>p45</fullName>
    </alternativeName>
    <component>
        <recommendedName>
            <fullName evidence="2">Caspase-1 subunit p20</fullName>
        </recommendedName>
    </component>
    <component>
        <recommendedName>
            <fullName evidence="2">Caspase-1 subunit p10</fullName>
        </recommendedName>
    </component>
</protein>
<proteinExistence type="evidence at transcript level"/>
<keyword id="KW-0053">Apoptosis</keyword>
<keyword id="KW-1003">Cell membrane</keyword>
<keyword id="KW-0963">Cytoplasm</keyword>
<keyword id="KW-0378">Hydrolase</keyword>
<keyword id="KW-0472">Membrane</keyword>
<keyword id="KW-0597">Phosphoprotein</keyword>
<keyword id="KW-0645">Protease</keyword>
<keyword id="KW-1185">Reference proteome</keyword>
<keyword id="KW-0788">Thiol protease</keyword>
<keyword id="KW-0832">Ubl conjugation</keyword>
<keyword id="KW-0865">Zymogen</keyword>